<dbReference type="EMBL" id="CU928145">
    <property type="protein sequence ID" value="CAU99796.1"/>
    <property type="molecule type" value="Genomic_DNA"/>
</dbReference>
<dbReference type="RefSeq" id="WP_001040205.1">
    <property type="nucleotide sequence ID" value="NZ_CP028304.1"/>
</dbReference>
<dbReference type="SMR" id="B7LHN2"/>
<dbReference type="GeneID" id="93778816"/>
<dbReference type="KEGG" id="eck:EC55989_3587"/>
<dbReference type="HOGENOM" id="CLU_089475_5_0_6"/>
<dbReference type="Proteomes" id="UP000000746">
    <property type="component" value="Chromosome"/>
</dbReference>
<dbReference type="GO" id="GO:0005829">
    <property type="term" value="C:cytosol"/>
    <property type="evidence" value="ECO:0007669"/>
    <property type="project" value="TreeGrafter"/>
</dbReference>
<dbReference type="GO" id="GO:0043024">
    <property type="term" value="F:ribosomal small subunit binding"/>
    <property type="evidence" value="ECO:0007669"/>
    <property type="project" value="TreeGrafter"/>
</dbReference>
<dbReference type="GO" id="GO:0030490">
    <property type="term" value="P:maturation of SSU-rRNA"/>
    <property type="evidence" value="ECO:0007669"/>
    <property type="project" value="UniProtKB-UniRule"/>
</dbReference>
<dbReference type="FunFam" id="3.30.300.20:FF:000007">
    <property type="entry name" value="Ribosome-binding factor A"/>
    <property type="match status" value="1"/>
</dbReference>
<dbReference type="Gene3D" id="3.30.300.20">
    <property type="match status" value="1"/>
</dbReference>
<dbReference type="HAMAP" id="MF_00003">
    <property type="entry name" value="RbfA"/>
    <property type="match status" value="1"/>
</dbReference>
<dbReference type="InterPro" id="IPR015946">
    <property type="entry name" value="KH_dom-like_a/b"/>
</dbReference>
<dbReference type="InterPro" id="IPR000238">
    <property type="entry name" value="RbfA"/>
</dbReference>
<dbReference type="InterPro" id="IPR023799">
    <property type="entry name" value="RbfA_dom_sf"/>
</dbReference>
<dbReference type="InterPro" id="IPR020053">
    <property type="entry name" value="Ribosome-bd_factorA_CS"/>
</dbReference>
<dbReference type="NCBIfam" id="TIGR00082">
    <property type="entry name" value="rbfA"/>
    <property type="match status" value="1"/>
</dbReference>
<dbReference type="PANTHER" id="PTHR33515">
    <property type="entry name" value="RIBOSOME-BINDING FACTOR A, CHLOROPLASTIC-RELATED"/>
    <property type="match status" value="1"/>
</dbReference>
<dbReference type="PANTHER" id="PTHR33515:SF1">
    <property type="entry name" value="RIBOSOME-BINDING FACTOR A, CHLOROPLASTIC-RELATED"/>
    <property type="match status" value="1"/>
</dbReference>
<dbReference type="Pfam" id="PF02033">
    <property type="entry name" value="RBFA"/>
    <property type="match status" value="1"/>
</dbReference>
<dbReference type="SUPFAM" id="SSF89919">
    <property type="entry name" value="Ribosome-binding factor A, RbfA"/>
    <property type="match status" value="1"/>
</dbReference>
<dbReference type="PROSITE" id="PS01319">
    <property type="entry name" value="RBFA"/>
    <property type="match status" value="1"/>
</dbReference>
<sequence length="133" mass="15154">MAKEFGRPQRVAQEMQKEIALILQREIKDPRLGMMTTVSGVEMSRDLAYAKVYVTFLNDKDEDAVKAGIKALQEASGFIRSLLGKAMRLRIVPELTFFYDNSLVEGMRMSNLVTSVVKHDEERRVNPDDSKED</sequence>
<keyword id="KW-0963">Cytoplasm</keyword>
<keyword id="KW-1185">Reference proteome</keyword>
<keyword id="KW-0690">Ribosome biogenesis</keyword>
<protein>
    <recommendedName>
        <fullName evidence="1">Ribosome-binding factor A</fullName>
    </recommendedName>
</protein>
<reference key="1">
    <citation type="journal article" date="2009" name="PLoS Genet.">
        <title>Organised genome dynamics in the Escherichia coli species results in highly diverse adaptive paths.</title>
        <authorList>
            <person name="Touchon M."/>
            <person name="Hoede C."/>
            <person name="Tenaillon O."/>
            <person name="Barbe V."/>
            <person name="Baeriswyl S."/>
            <person name="Bidet P."/>
            <person name="Bingen E."/>
            <person name="Bonacorsi S."/>
            <person name="Bouchier C."/>
            <person name="Bouvet O."/>
            <person name="Calteau A."/>
            <person name="Chiapello H."/>
            <person name="Clermont O."/>
            <person name="Cruveiller S."/>
            <person name="Danchin A."/>
            <person name="Diard M."/>
            <person name="Dossat C."/>
            <person name="Karoui M.E."/>
            <person name="Frapy E."/>
            <person name="Garry L."/>
            <person name="Ghigo J.M."/>
            <person name="Gilles A.M."/>
            <person name="Johnson J."/>
            <person name="Le Bouguenec C."/>
            <person name="Lescat M."/>
            <person name="Mangenot S."/>
            <person name="Martinez-Jehanne V."/>
            <person name="Matic I."/>
            <person name="Nassif X."/>
            <person name="Oztas S."/>
            <person name="Petit M.A."/>
            <person name="Pichon C."/>
            <person name="Rouy Z."/>
            <person name="Ruf C.S."/>
            <person name="Schneider D."/>
            <person name="Tourret J."/>
            <person name="Vacherie B."/>
            <person name="Vallenet D."/>
            <person name="Medigue C."/>
            <person name="Rocha E.P.C."/>
            <person name="Denamur E."/>
        </authorList>
    </citation>
    <scope>NUCLEOTIDE SEQUENCE [LARGE SCALE GENOMIC DNA]</scope>
    <source>
        <strain>55989 / EAEC</strain>
    </source>
</reference>
<name>RBFA_ECO55</name>
<organism>
    <name type="scientific">Escherichia coli (strain 55989 / EAEC)</name>
    <dbReference type="NCBI Taxonomy" id="585055"/>
    <lineage>
        <taxon>Bacteria</taxon>
        <taxon>Pseudomonadati</taxon>
        <taxon>Pseudomonadota</taxon>
        <taxon>Gammaproteobacteria</taxon>
        <taxon>Enterobacterales</taxon>
        <taxon>Enterobacteriaceae</taxon>
        <taxon>Escherichia</taxon>
    </lineage>
</organism>
<gene>
    <name evidence="1" type="primary">rbfA</name>
    <name type="ordered locus">EC55989_3587</name>
</gene>
<proteinExistence type="inferred from homology"/>
<accession>B7LHN2</accession>
<evidence type="ECO:0000255" key="1">
    <source>
        <dbReference type="HAMAP-Rule" id="MF_00003"/>
    </source>
</evidence>
<comment type="function">
    <text evidence="1">One of several proteins that assist in the late maturation steps of the functional core of the 30S ribosomal subunit. Associates with free 30S ribosomal subunits (but not with 30S subunits that are part of 70S ribosomes or polysomes). Required for efficient processing of 16S rRNA. May interact with the 5'-terminal helix region of 16S rRNA.</text>
</comment>
<comment type="subunit">
    <text evidence="1">Monomer. Binds 30S ribosomal subunits, but not 50S ribosomal subunits or 70S ribosomes.</text>
</comment>
<comment type="subcellular location">
    <subcellularLocation>
        <location evidence="1">Cytoplasm</location>
    </subcellularLocation>
</comment>
<comment type="similarity">
    <text evidence="1">Belongs to the RbfA family.</text>
</comment>
<feature type="chain" id="PRO_1000193252" description="Ribosome-binding factor A">
    <location>
        <begin position="1"/>
        <end position="133"/>
    </location>
</feature>